<organism>
    <name type="scientific">Actinobacillus pleuropneumoniae serotype 7 (strain AP76)</name>
    <dbReference type="NCBI Taxonomy" id="537457"/>
    <lineage>
        <taxon>Bacteria</taxon>
        <taxon>Pseudomonadati</taxon>
        <taxon>Pseudomonadota</taxon>
        <taxon>Gammaproteobacteria</taxon>
        <taxon>Pasteurellales</taxon>
        <taxon>Pasteurellaceae</taxon>
        <taxon>Actinobacillus</taxon>
    </lineage>
</organism>
<proteinExistence type="inferred from homology"/>
<accession>B3GYV5</accession>
<evidence type="ECO:0000255" key="1">
    <source>
        <dbReference type="HAMAP-Rule" id="MF_01322"/>
    </source>
</evidence>
<dbReference type="EC" id="2.7.7.6" evidence="1"/>
<dbReference type="EMBL" id="CP001091">
    <property type="protein sequence ID" value="ACE62441.1"/>
    <property type="molecule type" value="Genomic_DNA"/>
</dbReference>
<dbReference type="RefSeq" id="WP_005618195.1">
    <property type="nucleotide sequence ID" value="NC_010939.1"/>
</dbReference>
<dbReference type="SMR" id="B3GYV5"/>
<dbReference type="KEGG" id="apa:APP7_1789"/>
<dbReference type="HOGENOM" id="CLU_000524_3_1_6"/>
<dbReference type="Proteomes" id="UP000001226">
    <property type="component" value="Chromosome"/>
</dbReference>
<dbReference type="GO" id="GO:0000428">
    <property type="term" value="C:DNA-directed RNA polymerase complex"/>
    <property type="evidence" value="ECO:0007669"/>
    <property type="project" value="UniProtKB-KW"/>
</dbReference>
<dbReference type="GO" id="GO:0003677">
    <property type="term" value="F:DNA binding"/>
    <property type="evidence" value="ECO:0007669"/>
    <property type="project" value="UniProtKB-UniRule"/>
</dbReference>
<dbReference type="GO" id="GO:0003899">
    <property type="term" value="F:DNA-directed RNA polymerase activity"/>
    <property type="evidence" value="ECO:0007669"/>
    <property type="project" value="UniProtKB-UniRule"/>
</dbReference>
<dbReference type="GO" id="GO:0000287">
    <property type="term" value="F:magnesium ion binding"/>
    <property type="evidence" value="ECO:0007669"/>
    <property type="project" value="UniProtKB-UniRule"/>
</dbReference>
<dbReference type="GO" id="GO:0008270">
    <property type="term" value="F:zinc ion binding"/>
    <property type="evidence" value="ECO:0007669"/>
    <property type="project" value="UniProtKB-UniRule"/>
</dbReference>
<dbReference type="GO" id="GO:0006351">
    <property type="term" value="P:DNA-templated transcription"/>
    <property type="evidence" value="ECO:0007669"/>
    <property type="project" value="UniProtKB-UniRule"/>
</dbReference>
<dbReference type="CDD" id="cd02655">
    <property type="entry name" value="RNAP_beta'_C"/>
    <property type="match status" value="1"/>
</dbReference>
<dbReference type="CDD" id="cd01609">
    <property type="entry name" value="RNAP_beta'_N"/>
    <property type="match status" value="1"/>
</dbReference>
<dbReference type="FunFam" id="1.10.132.30:FF:000003">
    <property type="entry name" value="DNA-directed RNA polymerase subunit beta"/>
    <property type="match status" value="1"/>
</dbReference>
<dbReference type="FunFam" id="1.10.150.390:FF:000002">
    <property type="entry name" value="DNA-directed RNA polymerase subunit beta"/>
    <property type="match status" value="1"/>
</dbReference>
<dbReference type="FunFam" id="4.10.860.120:FF:000001">
    <property type="entry name" value="DNA-directed RNA polymerase subunit beta"/>
    <property type="match status" value="1"/>
</dbReference>
<dbReference type="Gene3D" id="1.10.132.30">
    <property type="match status" value="1"/>
</dbReference>
<dbReference type="Gene3D" id="1.10.150.390">
    <property type="match status" value="1"/>
</dbReference>
<dbReference type="Gene3D" id="1.10.1790.20">
    <property type="match status" value="1"/>
</dbReference>
<dbReference type="Gene3D" id="1.10.40.90">
    <property type="match status" value="1"/>
</dbReference>
<dbReference type="Gene3D" id="2.40.40.20">
    <property type="match status" value="1"/>
</dbReference>
<dbReference type="Gene3D" id="2.40.50.100">
    <property type="match status" value="3"/>
</dbReference>
<dbReference type="Gene3D" id="4.10.860.120">
    <property type="entry name" value="RNA polymerase II, clamp domain"/>
    <property type="match status" value="1"/>
</dbReference>
<dbReference type="Gene3D" id="1.10.274.100">
    <property type="entry name" value="RNA polymerase Rpb1, domain 3"/>
    <property type="match status" value="1"/>
</dbReference>
<dbReference type="HAMAP" id="MF_01322">
    <property type="entry name" value="RNApol_bact_RpoC"/>
    <property type="match status" value="1"/>
</dbReference>
<dbReference type="InterPro" id="IPR045867">
    <property type="entry name" value="DNA-dir_RpoC_beta_prime"/>
</dbReference>
<dbReference type="InterPro" id="IPR012754">
    <property type="entry name" value="DNA-dir_RpoC_beta_prime_bact"/>
</dbReference>
<dbReference type="InterPro" id="IPR000722">
    <property type="entry name" value="RNA_pol_asu"/>
</dbReference>
<dbReference type="InterPro" id="IPR006592">
    <property type="entry name" value="RNA_pol_N"/>
</dbReference>
<dbReference type="InterPro" id="IPR007080">
    <property type="entry name" value="RNA_pol_Rpb1_1"/>
</dbReference>
<dbReference type="InterPro" id="IPR007066">
    <property type="entry name" value="RNA_pol_Rpb1_3"/>
</dbReference>
<dbReference type="InterPro" id="IPR042102">
    <property type="entry name" value="RNA_pol_Rpb1_3_sf"/>
</dbReference>
<dbReference type="InterPro" id="IPR007083">
    <property type="entry name" value="RNA_pol_Rpb1_4"/>
</dbReference>
<dbReference type="InterPro" id="IPR007081">
    <property type="entry name" value="RNA_pol_Rpb1_5"/>
</dbReference>
<dbReference type="InterPro" id="IPR044893">
    <property type="entry name" value="RNA_pol_Rpb1_clamp_domain"/>
</dbReference>
<dbReference type="InterPro" id="IPR038120">
    <property type="entry name" value="Rpb1_funnel_sf"/>
</dbReference>
<dbReference type="NCBIfam" id="TIGR02386">
    <property type="entry name" value="rpoC_TIGR"/>
    <property type="match status" value="1"/>
</dbReference>
<dbReference type="PANTHER" id="PTHR19376">
    <property type="entry name" value="DNA-DIRECTED RNA POLYMERASE"/>
    <property type="match status" value="1"/>
</dbReference>
<dbReference type="PANTHER" id="PTHR19376:SF54">
    <property type="entry name" value="DNA-DIRECTED RNA POLYMERASE SUBUNIT BETA"/>
    <property type="match status" value="1"/>
</dbReference>
<dbReference type="Pfam" id="PF04997">
    <property type="entry name" value="RNA_pol_Rpb1_1"/>
    <property type="match status" value="1"/>
</dbReference>
<dbReference type="Pfam" id="PF00623">
    <property type="entry name" value="RNA_pol_Rpb1_2"/>
    <property type="match status" value="2"/>
</dbReference>
<dbReference type="Pfam" id="PF04983">
    <property type="entry name" value="RNA_pol_Rpb1_3"/>
    <property type="match status" value="1"/>
</dbReference>
<dbReference type="Pfam" id="PF05000">
    <property type="entry name" value="RNA_pol_Rpb1_4"/>
    <property type="match status" value="1"/>
</dbReference>
<dbReference type="Pfam" id="PF04998">
    <property type="entry name" value="RNA_pol_Rpb1_5"/>
    <property type="match status" value="1"/>
</dbReference>
<dbReference type="SMART" id="SM00663">
    <property type="entry name" value="RPOLA_N"/>
    <property type="match status" value="1"/>
</dbReference>
<dbReference type="SUPFAM" id="SSF64484">
    <property type="entry name" value="beta and beta-prime subunits of DNA dependent RNA-polymerase"/>
    <property type="match status" value="1"/>
</dbReference>
<feature type="chain" id="PRO_0000353278" description="DNA-directed RNA polymerase subunit beta'">
    <location>
        <begin position="1"/>
        <end position="1423"/>
    </location>
</feature>
<feature type="binding site" evidence="1">
    <location>
        <position position="71"/>
    </location>
    <ligand>
        <name>Zn(2+)</name>
        <dbReference type="ChEBI" id="CHEBI:29105"/>
        <label>1</label>
    </ligand>
</feature>
<feature type="binding site" evidence="1">
    <location>
        <position position="73"/>
    </location>
    <ligand>
        <name>Zn(2+)</name>
        <dbReference type="ChEBI" id="CHEBI:29105"/>
        <label>1</label>
    </ligand>
</feature>
<feature type="binding site" evidence="1">
    <location>
        <position position="86"/>
    </location>
    <ligand>
        <name>Zn(2+)</name>
        <dbReference type="ChEBI" id="CHEBI:29105"/>
        <label>1</label>
    </ligand>
</feature>
<feature type="binding site" evidence="1">
    <location>
        <position position="89"/>
    </location>
    <ligand>
        <name>Zn(2+)</name>
        <dbReference type="ChEBI" id="CHEBI:29105"/>
        <label>1</label>
    </ligand>
</feature>
<feature type="binding site" evidence="1">
    <location>
        <position position="461"/>
    </location>
    <ligand>
        <name>Mg(2+)</name>
        <dbReference type="ChEBI" id="CHEBI:18420"/>
    </ligand>
</feature>
<feature type="binding site" evidence="1">
    <location>
        <position position="463"/>
    </location>
    <ligand>
        <name>Mg(2+)</name>
        <dbReference type="ChEBI" id="CHEBI:18420"/>
    </ligand>
</feature>
<feature type="binding site" evidence="1">
    <location>
        <position position="465"/>
    </location>
    <ligand>
        <name>Mg(2+)</name>
        <dbReference type="ChEBI" id="CHEBI:18420"/>
    </ligand>
</feature>
<feature type="binding site" evidence="1">
    <location>
        <position position="815"/>
    </location>
    <ligand>
        <name>Zn(2+)</name>
        <dbReference type="ChEBI" id="CHEBI:29105"/>
        <label>2</label>
    </ligand>
</feature>
<feature type="binding site" evidence="1">
    <location>
        <position position="889"/>
    </location>
    <ligand>
        <name>Zn(2+)</name>
        <dbReference type="ChEBI" id="CHEBI:29105"/>
        <label>2</label>
    </ligand>
</feature>
<feature type="binding site" evidence="1">
    <location>
        <position position="896"/>
    </location>
    <ligand>
        <name>Zn(2+)</name>
        <dbReference type="ChEBI" id="CHEBI:29105"/>
        <label>2</label>
    </ligand>
</feature>
<feature type="binding site" evidence="1">
    <location>
        <position position="899"/>
    </location>
    <ligand>
        <name>Zn(2+)</name>
        <dbReference type="ChEBI" id="CHEBI:29105"/>
        <label>2</label>
    </ligand>
</feature>
<gene>
    <name evidence="1" type="primary">rpoC</name>
    <name type="ordered locus">APP7_1789</name>
</gene>
<protein>
    <recommendedName>
        <fullName evidence="1">DNA-directed RNA polymerase subunit beta'</fullName>
        <shortName evidence="1">RNAP subunit beta'</shortName>
        <ecNumber evidence="1">2.7.7.6</ecNumber>
    </recommendedName>
    <alternativeName>
        <fullName evidence="1">RNA polymerase subunit beta'</fullName>
    </alternativeName>
    <alternativeName>
        <fullName evidence="1">Transcriptase subunit beta'</fullName>
    </alternativeName>
</protein>
<comment type="function">
    <text evidence="1">DNA-dependent RNA polymerase catalyzes the transcription of DNA into RNA using the four ribonucleoside triphosphates as substrates.</text>
</comment>
<comment type="catalytic activity">
    <reaction evidence="1">
        <text>RNA(n) + a ribonucleoside 5'-triphosphate = RNA(n+1) + diphosphate</text>
        <dbReference type="Rhea" id="RHEA:21248"/>
        <dbReference type="Rhea" id="RHEA-COMP:14527"/>
        <dbReference type="Rhea" id="RHEA-COMP:17342"/>
        <dbReference type="ChEBI" id="CHEBI:33019"/>
        <dbReference type="ChEBI" id="CHEBI:61557"/>
        <dbReference type="ChEBI" id="CHEBI:140395"/>
        <dbReference type="EC" id="2.7.7.6"/>
    </reaction>
</comment>
<comment type="cofactor">
    <cofactor evidence="1">
        <name>Mg(2+)</name>
        <dbReference type="ChEBI" id="CHEBI:18420"/>
    </cofactor>
    <text evidence="1">Binds 1 Mg(2+) ion per subunit.</text>
</comment>
<comment type="cofactor">
    <cofactor evidence="1">
        <name>Zn(2+)</name>
        <dbReference type="ChEBI" id="CHEBI:29105"/>
    </cofactor>
    <text evidence="1">Binds 2 Zn(2+) ions per subunit.</text>
</comment>
<comment type="subunit">
    <text evidence="1">The RNAP catalytic core consists of 2 alpha, 1 beta, 1 beta' and 1 omega subunit. When a sigma factor is associated with the core the holoenzyme is formed, which can initiate transcription.</text>
</comment>
<comment type="similarity">
    <text evidence="1">Belongs to the RNA polymerase beta' chain family.</text>
</comment>
<name>RPOC_ACTP7</name>
<keyword id="KW-0240">DNA-directed RNA polymerase</keyword>
<keyword id="KW-0460">Magnesium</keyword>
<keyword id="KW-0479">Metal-binding</keyword>
<keyword id="KW-0548">Nucleotidyltransferase</keyword>
<keyword id="KW-0804">Transcription</keyword>
<keyword id="KW-0808">Transferase</keyword>
<keyword id="KW-0862">Zinc</keyword>
<sequence>MKDLVKFLKAQSKSNDDFDVIKIGLASPDKIRSWSFGEVKKPETINYRTFKPERDGLFCARIFGPVKDYECLCGKYKRLKHRGVICEKCGVEVTQTKVRRDRMGHIELACPVAHIWFLKSLPSRIGLILDMPLRDIERVLYFESYVVTEPGMTDLEKNQLLTEEQFLDAEERWGDEFEAKMGAEGIQALLRDMDLEHQCEMMREELQETNSETKRKKITKRLKLLEAFQQSGNKPEWMVMTVLPVLPPDLRPLVPLDGGRFATSDLNDLYRRVINRNNRLKRLLDLVAPDIIVRNEKRMLQESVDALLDNGRRGRAITGSNKRPLKSLADMIKGKQGRFRQNLLGKRVDYSGRSVITVGPYLHLHQCGLPKKMALELFRPFIYSKLESRGIASTIKAAKKMVEREEPIVWDILAEVIREHPILLNRAPTLHRLGIQAFEPILIEGKAIQLHPLVCAAFNADFDGDQMAVHVPLTLEAQLEARALMMSTNNVLSPASGDPIIVPSQDVVLGLYYMTREKVNAKGEGMYFLDPREAEKAYRTGQAELHARVKVRITEHVKNEAGELVAETKLLDTTIGRAILWMIAPKGMPFKVFNQTLGKKAISKLINESYRRLGLKESVILADQIMYTGFAYAARSGASVGIDDMVIPAQKHEIIRAAEAEVAEIQEQFNSGLVTAGERYNKVIDIWAAANERVAKAMMENLSTEEVINREGNPEKQASFNSIFMMADSGARGSAAQIRQLAGMRGLMARPDGSIIETPITANFREGLNVLQYFISTHGARKGLADTALKTANSGYLTRRLVDVAQDLVITEDDCGTHEGIVMTPLIEGGDVKEALRDRVLGRVVAEDVLKPGTEEVLIPRNTLIDEKWCDVIDAESVDVIKVRSVVTCNTDFGVCAKCYGRDLARGHLINQGEAVGVIAAQSIGEPGTQLTMRTFHIGGAASAAAKESSIQVKNAGTIKLTNAKFVTNKEGKIVLTSRNTELTVIDTFGRTKENYKVPYGAVLSKNDGAEVAVGEVVANWDPHTMPVISEVSGRIQFSDIVDGLTVTRQTDELTGLSSIVVQDVGERATAGKDLRPALRLVDAQGNDILIPSTDVAAQYFLPGKAIVTLDDGAEIEVGEALARIPQESVGTKDITGGLPRVADLFEARKPKEPAILAEISGIVSFGKETKGKRRLVITPAEGEAFEEMIPKWRQLNVFEGEMVQRGDVISDGAETPHDILRLRGVHAVTDYIVNEVQEVYRLQGVKINDKHIEVIVRQMLRKAVITNAYDSEFLEGEQVEVSRVKIANRKRAEEGKPLVEFERELLGITKASLATESFISAASFQETTRVLTEAAVAGKRDELRGLKENVIVGRLIPAGTGFAYHQNRAKKRNQPEQAGAFEAPVAKANGFATDADIEAEFEFVADDATQSLAALLNAGDEE</sequence>
<reference key="1">
    <citation type="submission" date="2008-06" db="EMBL/GenBank/DDBJ databases">
        <title>Genome and proteome analysis of A. pleuropneumoniae serotype 7.</title>
        <authorList>
            <person name="Linke B."/>
            <person name="Buettner F."/>
            <person name="Martinez-Arias R."/>
            <person name="Goesmann A."/>
            <person name="Baltes N."/>
            <person name="Tegetmeyer H."/>
            <person name="Singh M."/>
            <person name="Gerlach G.F."/>
        </authorList>
    </citation>
    <scope>NUCLEOTIDE SEQUENCE [LARGE SCALE GENOMIC DNA]</scope>
    <source>
        <strain>AP76</strain>
    </source>
</reference>